<name>NP_ADE04</name>
<keyword id="KW-0007">Acetylation</keyword>
<keyword id="KW-0238">DNA-binding</keyword>
<keyword id="KW-1048">Host nucleus</keyword>
<keyword id="KW-0945">Host-virus interaction</keyword>
<keyword id="KW-0426">Late protein</keyword>
<keyword id="KW-0597">Phosphoprotein</keyword>
<keyword id="KW-1163">Viral penetration into host nucleus</keyword>
<keyword id="KW-0946">Virion</keyword>
<keyword id="KW-1160">Virus entry into host cell</keyword>
<evidence type="ECO:0000255" key="1">
    <source>
        <dbReference type="HAMAP-Rule" id="MF_04056"/>
    </source>
</evidence>
<protein>
    <recommendedName>
        <fullName evidence="1">Pre-histone-like nucleoprotein</fullName>
    </recommendedName>
    <alternativeName>
        <fullName evidence="1">Pre-core protein VII</fullName>
        <shortName evidence="1">pVII</shortName>
    </alternativeName>
    <component>
        <recommendedName>
            <fullName evidence="1">Histone-like nucleoprotein</fullName>
            <shortName evidence="1">NP</shortName>
        </recommendedName>
        <alternativeName>
            <fullName evidence="1">Core protein VII</fullName>
        </alternativeName>
    </component>
</protein>
<proteinExistence type="inferred from homology"/>
<accession>Q96831</accession>
<sequence>MSIFISPSNNTGWGLRAPSKMYGGAXQRSTQHPVRVRGHFRAPWGALKGRVRSRTTVDDVIDQVVADARNYTPAAAPVSTVDAVIDSVVSDARRYARAKSRRRRIARRHRSTTAMRAARALLRRARRTGRRAMLRAARRAASGASAGRTRRRAATAAATAISSMSRPRRGNVYWVRDXATGVRVPVRTRPPRT</sequence>
<reference key="1">
    <citation type="submission" date="1996-10" db="EMBL/GenBank/DDBJ databases">
        <authorList>
            <person name="Tarassishin L."/>
            <person name="Szawlowski P.W.S."/>
            <person name="McLay J."/>
            <person name="Russell W.C."/>
        </authorList>
    </citation>
    <scope>NUCLEOTIDE SEQUENCE [GENOMIC DNA]</scope>
    <source>
        <strain>Isolate RI-6</strain>
    </source>
</reference>
<dbReference type="EMBL" id="U70921">
    <property type="protein sequence ID" value="AAC83411.1"/>
    <property type="molecule type" value="Genomic_DNA"/>
</dbReference>
<dbReference type="GO" id="GO:0043657">
    <property type="term" value="C:host cell"/>
    <property type="evidence" value="ECO:0007669"/>
    <property type="project" value="GOC"/>
</dbReference>
<dbReference type="GO" id="GO:0044196">
    <property type="term" value="C:host cell nucleolus"/>
    <property type="evidence" value="ECO:0007669"/>
    <property type="project" value="UniProtKB-SubCell"/>
</dbReference>
<dbReference type="GO" id="GO:0019028">
    <property type="term" value="C:viral capsid"/>
    <property type="evidence" value="ECO:0007669"/>
    <property type="project" value="InterPro"/>
</dbReference>
<dbReference type="GO" id="GO:0003677">
    <property type="term" value="F:DNA binding"/>
    <property type="evidence" value="ECO:0007669"/>
    <property type="project" value="UniProtKB-UniRule"/>
</dbReference>
<dbReference type="GO" id="GO:0046718">
    <property type="term" value="P:symbiont entry into host cell"/>
    <property type="evidence" value="ECO:0007669"/>
    <property type="project" value="UniProtKB-UniRule"/>
</dbReference>
<dbReference type="GO" id="GO:0075732">
    <property type="term" value="P:viral penetration into host nucleus"/>
    <property type="evidence" value="ECO:0007669"/>
    <property type="project" value="UniProtKB-UniRule"/>
</dbReference>
<dbReference type="HAMAP" id="MF_04056">
    <property type="entry name" value="ADV_PVII"/>
    <property type="match status" value="1"/>
</dbReference>
<dbReference type="InterPro" id="IPR004912">
    <property type="entry name" value="Adeno_VII"/>
</dbReference>
<dbReference type="Pfam" id="PF03228">
    <property type="entry name" value="Adeno_VII"/>
    <property type="match status" value="1"/>
</dbReference>
<comment type="function">
    <text evidence="1">Plays a role in the inhibition of host immune response within the nucleus. Interacts with cellular nucleosomes and immobilizes the host immune danger signal HMGB1 on chromatin. In turn, prevents HMGB1 release out of the cell and thus decreases inflammation. Also plays a role in the wrapping and condensation of the viral DNA. May also promote viral genome import into the nucleus.</text>
</comment>
<comment type="subunit">
    <text evidence="1">Interacts with the core-capsid bridging protein; this interaction bridges the virus core to the capsid. Interacts with host NPM1; this interaction might play a role in placing the pre-histone-like nucleoprotein on the viral DNA or regulating viral gene expression. Interacts with host HMGB1; this interaction inhibits host immune response.</text>
</comment>
<comment type="subcellular location">
    <molecule>Histone-like nucleoprotein</molecule>
    <subcellularLocation>
        <location evidence="1">Virion</location>
    </subcellularLocation>
    <text evidence="1">Located inside the capsid in association with the viral DNA (core). Present in about 1070 copies per virion.</text>
</comment>
<comment type="subcellular location">
    <molecule>Pre-histone-like nucleoprotein</molecule>
    <subcellularLocation>
        <location evidence="1">Host nucleus</location>
        <location evidence="1">Host nucleolus</location>
    </subcellularLocation>
</comment>
<comment type="induction">
    <text evidence="1">Expressed in the late phase of the viral replicative cycle.</text>
</comment>
<comment type="PTM">
    <text evidence="1">Cleaved near the N-terminus by the viral protease during virion maturation to form the mature protein.</text>
</comment>
<comment type="miscellaneous">
    <text evidence="1">All late proteins expressed from the major late promoter are produced by alternative splicing and alternative polyadenylation of the same gene giving rise to non-overlapping ORFs. A leader sequence is present in the N-terminus of all these mRNAs and is recognized by the viral shutoff protein to provide expression although conventional translation via ribosome scanning from the cap has been shut off in the host cell.</text>
</comment>
<comment type="similarity">
    <text evidence="1">Belongs to the adenoviridae histone-like nucleoprotein family.</text>
</comment>
<gene>
    <name evidence="1" type="primary">L2</name>
    <name type="synonym">PVII</name>
</gene>
<organismHost>
    <name type="scientific">Homo sapiens</name>
    <name type="common">Human</name>
    <dbReference type="NCBI Taxonomy" id="9606"/>
</organismHost>
<feature type="initiator methionine" description="Removed" evidence="1">
    <location>
        <position position="1"/>
    </location>
</feature>
<feature type="chain" id="PRO_0000441020" description="Pre-histone-like nucleoprotein" evidence="1">
    <location>
        <begin position="2"/>
        <end position="193"/>
    </location>
</feature>
<feature type="propeptide" id="PRO_0000441021" evidence="1">
    <location>
        <begin position="2"/>
        <end position="24"/>
    </location>
</feature>
<feature type="chain" id="PRO_0000441022" description="Histone-like nucleoprotein" evidence="1">
    <location>
        <begin position="25"/>
        <end position="193"/>
    </location>
</feature>
<feature type="short sequence motif" description="Nuclear localization signal" evidence="1">
    <location>
        <begin position="183"/>
        <end position="193"/>
    </location>
</feature>
<feature type="site" description="Cleavage; by viral protease" evidence="1">
    <location>
        <begin position="24"/>
        <end position="25"/>
    </location>
</feature>
<feature type="modified residue" description="N-acetylserine; by host" evidence="1">
    <location>
        <position position="2"/>
    </location>
</feature>
<feature type="modified residue" description="N6-acetyllysine; by host" evidence="1">
    <location>
        <position position="48"/>
    </location>
</feature>
<feature type="modified residue" description="Phosphothreonine; by host" evidence="1">
    <location>
        <position position="55"/>
    </location>
</feature>
<organism>
    <name type="scientific">Human adenovirus E serotype 4</name>
    <name type="common">HAdV-4</name>
    <name type="synonym">Human adenovirus 4</name>
    <dbReference type="NCBI Taxonomy" id="28280"/>
    <lineage>
        <taxon>Viruses</taxon>
        <taxon>Varidnaviria</taxon>
        <taxon>Bamfordvirae</taxon>
        <taxon>Preplasmiviricota</taxon>
        <taxon>Tectiliviricetes</taxon>
        <taxon>Rowavirales</taxon>
        <taxon>Adenoviridae</taxon>
        <taxon>Mastadenovirus</taxon>
        <taxon>Human mastadenovirus E</taxon>
    </lineage>
</organism>